<accession>Q0HI72</accession>
<feature type="chain" id="PRO_0000375378" description="YcgL domain-containing protein Shewmr4_2172">
    <location>
        <begin position="1"/>
        <end position="92"/>
    </location>
</feature>
<feature type="domain" description="YcgL" evidence="1">
    <location>
        <begin position="1"/>
        <end position="85"/>
    </location>
</feature>
<sequence length="92" mass="10381">MLCAVYKSSRKADTYLFVNKRDCFDDVPQALLDMFGVPQLVMVFPIAKRESLGIADIQKVRAALEEKGFYLQIPPPQVNLLAEHRVSLGIKD</sequence>
<name>Y2172_SHESM</name>
<protein>
    <recommendedName>
        <fullName evidence="1">YcgL domain-containing protein Shewmr4_2172</fullName>
    </recommendedName>
</protein>
<organism>
    <name type="scientific">Shewanella sp. (strain MR-4)</name>
    <dbReference type="NCBI Taxonomy" id="60480"/>
    <lineage>
        <taxon>Bacteria</taxon>
        <taxon>Pseudomonadati</taxon>
        <taxon>Pseudomonadota</taxon>
        <taxon>Gammaproteobacteria</taxon>
        <taxon>Alteromonadales</taxon>
        <taxon>Shewanellaceae</taxon>
        <taxon>Shewanella</taxon>
    </lineage>
</organism>
<proteinExistence type="inferred from homology"/>
<gene>
    <name type="ordered locus">Shewmr4_2172</name>
</gene>
<dbReference type="EMBL" id="CP000446">
    <property type="protein sequence ID" value="ABI39245.1"/>
    <property type="molecule type" value="Genomic_DNA"/>
</dbReference>
<dbReference type="RefSeq" id="WP_011622935.1">
    <property type="nucleotide sequence ID" value="NC_008321.1"/>
</dbReference>
<dbReference type="SMR" id="Q0HI72"/>
<dbReference type="KEGG" id="she:Shewmr4_2172"/>
<dbReference type="HOGENOM" id="CLU_155118_1_0_6"/>
<dbReference type="Gene3D" id="3.10.510.20">
    <property type="entry name" value="YcgL domain"/>
    <property type="match status" value="1"/>
</dbReference>
<dbReference type="HAMAP" id="MF_01866">
    <property type="entry name" value="UPF0745"/>
    <property type="match status" value="1"/>
</dbReference>
<dbReference type="InterPro" id="IPR038068">
    <property type="entry name" value="YcgL-like_sf"/>
</dbReference>
<dbReference type="InterPro" id="IPR027354">
    <property type="entry name" value="YcgL_dom"/>
</dbReference>
<dbReference type="PANTHER" id="PTHR38109">
    <property type="entry name" value="PROTEIN YCGL"/>
    <property type="match status" value="1"/>
</dbReference>
<dbReference type="PANTHER" id="PTHR38109:SF1">
    <property type="entry name" value="PROTEIN YCGL"/>
    <property type="match status" value="1"/>
</dbReference>
<dbReference type="Pfam" id="PF05166">
    <property type="entry name" value="YcgL"/>
    <property type="match status" value="1"/>
</dbReference>
<dbReference type="SUPFAM" id="SSF160191">
    <property type="entry name" value="YcgL-like"/>
    <property type="match status" value="1"/>
</dbReference>
<dbReference type="PROSITE" id="PS51648">
    <property type="entry name" value="YCGL"/>
    <property type="match status" value="1"/>
</dbReference>
<evidence type="ECO:0000255" key="1">
    <source>
        <dbReference type="HAMAP-Rule" id="MF_01866"/>
    </source>
</evidence>
<reference key="1">
    <citation type="submission" date="2006-08" db="EMBL/GenBank/DDBJ databases">
        <title>Complete sequence of Shewanella sp. MR-4.</title>
        <authorList>
            <consortium name="US DOE Joint Genome Institute"/>
            <person name="Copeland A."/>
            <person name="Lucas S."/>
            <person name="Lapidus A."/>
            <person name="Barry K."/>
            <person name="Detter J.C."/>
            <person name="Glavina del Rio T."/>
            <person name="Hammon N."/>
            <person name="Israni S."/>
            <person name="Dalin E."/>
            <person name="Tice H."/>
            <person name="Pitluck S."/>
            <person name="Kiss H."/>
            <person name="Brettin T."/>
            <person name="Bruce D."/>
            <person name="Han C."/>
            <person name="Tapia R."/>
            <person name="Gilna P."/>
            <person name="Schmutz J."/>
            <person name="Larimer F."/>
            <person name="Land M."/>
            <person name="Hauser L."/>
            <person name="Kyrpides N."/>
            <person name="Mikhailova N."/>
            <person name="Nealson K."/>
            <person name="Konstantinidis K."/>
            <person name="Klappenbach J."/>
            <person name="Tiedje J."/>
            <person name="Richardson P."/>
        </authorList>
    </citation>
    <scope>NUCLEOTIDE SEQUENCE [LARGE SCALE GENOMIC DNA]</scope>
    <source>
        <strain>MR-4</strain>
    </source>
</reference>